<evidence type="ECO:0000250" key="1"/>
<evidence type="ECO:0000255" key="2"/>
<evidence type="ECO:0000303" key="3">
    <source ref="2"/>
</evidence>
<evidence type="ECO:0000305" key="4"/>
<protein>
    <recommendedName>
        <fullName>Myelin proteolipid protein B</fullName>
        <shortName>PLP-B</shortName>
    </recommendedName>
    <alternativeName>
        <fullName>Lipophilin-B</fullName>
    </alternativeName>
</protein>
<sequence>MGWHDGCIRCMVGVPFASVIATVLCFAGVALFCGCGHEALSGTEKLIETYFSKNYQEYEYLIHVINAFQYVIYGIAIFFFLYGILLLAEGFYTTTAIKHILGEFKPPAMKGGLISTVTGGPPKGRSTRGRQPVHTIELICRCLGKWLGHPDKFVGVTYVITILWILIFACSAVPVYIYFNTWVTCQSIAFPGKTTTSVSTLCLDARMYGVLPWNAFPGKVCGTSLLAICKTSEFQMTFHLFIAAFVGAAATLVALLTYMVGASFNYAVLRVTGRSDRSKF</sequence>
<keyword id="KW-0025">Alternative splicing</keyword>
<keyword id="KW-1003">Cell membrane</keyword>
<keyword id="KW-1015">Disulfide bond</keyword>
<keyword id="KW-0449">Lipoprotein</keyword>
<keyword id="KW-0472">Membrane</keyword>
<keyword id="KW-0564">Palmitate</keyword>
<keyword id="KW-1185">Reference proteome</keyword>
<keyword id="KW-0812">Transmembrane</keyword>
<keyword id="KW-1133">Transmembrane helix</keyword>
<gene>
    <name type="primary">plp1-b</name>
    <name type="synonym">plp1</name>
</gene>
<feature type="chain" id="PRO_0000159013" description="Myelin proteolipid protein B">
    <location>
        <begin position="1"/>
        <end position="280"/>
    </location>
</feature>
<feature type="topological domain" description="Cytoplasmic" evidence="2">
    <location>
        <begin position="1"/>
        <end position="10"/>
    </location>
</feature>
<feature type="transmembrane region" description="Helical; Name=1" evidence="2">
    <location>
        <begin position="11"/>
        <end position="36"/>
    </location>
</feature>
<feature type="topological domain" description="Extracellular" evidence="2">
    <location>
        <begin position="37"/>
        <end position="59"/>
    </location>
</feature>
<feature type="transmembrane region" description="Helical; Name=2" evidence="2">
    <location>
        <begin position="60"/>
        <end position="88"/>
    </location>
</feature>
<feature type="topological domain" description="Cytoplasmic" evidence="2">
    <location>
        <begin position="89"/>
        <end position="152"/>
    </location>
</feature>
<feature type="transmembrane region" description="Helical; Name=3" evidence="2">
    <location>
        <begin position="153"/>
        <end position="179"/>
    </location>
</feature>
<feature type="topological domain" description="Extracellular" evidence="2">
    <location>
        <begin position="180"/>
        <end position="239"/>
    </location>
</feature>
<feature type="transmembrane region" description="Helical; Name=4" evidence="2">
    <location>
        <begin position="240"/>
        <end position="269"/>
    </location>
</feature>
<feature type="topological domain" description="Cytoplasmic" evidence="2">
    <location>
        <begin position="270"/>
        <end position="280"/>
    </location>
</feature>
<feature type="lipid moiety-binding region" description="S-palmitoyl cysteine" evidence="1">
    <location>
        <position position="7"/>
    </location>
</feature>
<feature type="lipid moiety-binding region" description="S-palmitoyl cysteine" evidence="1">
    <location>
        <position position="10"/>
    </location>
</feature>
<feature type="lipid moiety-binding region" description="S-palmitoyl cysteine" evidence="1">
    <location>
        <position position="140"/>
    </location>
</feature>
<feature type="lipid moiety-binding region" description="S-palmitoyl cysteine" evidence="1">
    <location>
        <position position="142"/>
    </location>
</feature>
<feature type="disulfide bond" evidence="1">
    <location>
        <begin position="185"/>
        <end position="229"/>
    </location>
</feature>
<feature type="disulfide bond" evidence="1">
    <location>
        <begin position="202"/>
        <end position="221"/>
    </location>
</feature>
<feature type="splice variant" id="VSP_036602" description="In isoform 2." evidence="3">
    <original>LTYMVGASFNYAVLRVTGRSDRSKF</original>
    <variation>IHALMCLSANRVYQQRVLEEKGKSQETPQAESSELTDILPETPQRSAENLL</variation>
    <location>
        <begin position="256"/>
        <end position="280"/>
    </location>
</feature>
<feature type="sequence conflict" description="In Ref. 1; CAB46194." evidence="4" ref="1">
    <original>Y</original>
    <variation>F</variation>
    <location>
        <position position="70"/>
    </location>
</feature>
<feature type="sequence conflict" description="In Ref. 1; CAB46194." evidence="4" ref="1">
    <original>I</original>
    <variation>M</variation>
    <location>
        <position position="188"/>
    </location>
</feature>
<feature type="sequence conflict" description="In Ref. 3; CAA43840." evidence="4" ref="3">
    <original>L</original>
    <variation>S</variation>
    <location>
        <position position="203"/>
    </location>
</feature>
<reference key="1">
    <citation type="submission" date="1992-12" db="EMBL/GenBank/DDBJ databases">
        <title>Molecular cloning of two genes for proteolipid protein from Xenopus laevis.</title>
        <authorList>
            <person name="Kiefer B."/>
            <person name="Schneider A."/>
            <person name="Nave K.-A."/>
        </authorList>
    </citation>
    <scope>NUCLEOTIDE SEQUENCE [MRNA] (ISOFORM 1)</scope>
    <source>
        <tissue>Brain</tissue>
    </source>
</reference>
<reference key="2">
    <citation type="submission" date="2003-06" db="EMBL/GenBank/DDBJ databases">
        <authorList>
            <consortium name="NIH - Xenopus Gene Collection (XGC) project"/>
        </authorList>
    </citation>
    <scope>NUCLEOTIDE SEQUENCE [LARGE SCALE MRNA] (ISOFORM 2)</scope>
    <source>
        <tissue>Tadpole</tissue>
    </source>
</reference>
<reference key="3">
    <citation type="journal article" date="1991" name="Biol. Chem. Hoppe-Seyler">
        <title>Evolution of the myelin integral membrane proteins of the central nervous system.</title>
        <authorList>
            <person name="Schliess F."/>
            <person name="Stoffel W."/>
        </authorList>
    </citation>
    <scope>NUCLEOTIDE SEQUENCE [GENOMIC DNA] OF 76-208</scope>
</reference>
<name>MYPRB_XENLA</name>
<organism>
    <name type="scientific">Xenopus laevis</name>
    <name type="common">African clawed frog</name>
    <dbReference type="NCBI Taxonomy" id="8355"/>
    <lineage>
        <taxon>Eukaryota</taxon>
        <taxon>Metazoa</taxon>
        <taxon>Chordata</taxon>
        <taxon>Craniata</taxon>
        <taxon>Vertebrata</taxon>
        <taxon>Euteleostomi</taxon>
        <taxon>Amphibia</taxon>
        <taxon>Batrachia</taxon>
        <taxon>Anura</taxon>
        <taxon>Pipoidea</taxon>
        <taxon>Pipidae</taxon>
        <taxon>Xenopodinae</taxon>
        <taxon>Xenopus</taxon>
        <taxon>Xenopus</taxon>
    </lineage>
</organism>
<comment type="function">
    <text>This is the major myelin protein from the central nervous system. It plays an important role in the formation or maintenance of the multilamellar structure of myelin.</text>
</comment>
<comment type="subcellular location">
    <subcellularLocation>
        <location evidence="1">Cell membrane</location>
        <topology evidence="1">Multi-pass membrane protein</topology>
    </subcellularLocation>
</comment>
<comment type="alternative products">
    <event type="alternative splicing"/>
    <isoform>
        <id>P23290-1</id>
        <name>1</name>
        <sequence type="displayed"/>
    </isoform>
    <isoform>
        <id>P23290-2</id>
        <name>2</name>
        <sequence type="described" ref="VSP_036602"/>
    </isoform>
</comment>
<comment type="similarity">
    <text evidence="4">Belongs to the myelin proteolipid protein family.</text>
</comment>
<dbReference type="EMBL" id="Z19523">
    <property type="protein sequence ID" value="CAB46194.1"/>
    <property type="molecule type" value="mRNA"/>
</dbReference>
<dbReference type="EMBL" id="BC053789">
    <property type="protein sequence ID" value="AAH53789.1"/>
    <property type="molecule type" value="mRNA"/>
</dbReference>
<dbReference type="EMBL" id="X61662">
    <property type="protein sequence ID" value="CAA43840.1"/>
    <property type="molecule type" value="Genomic_DNA"/>
</dbReference>
<dbReference type="EMBL" id="X61663">
    <property type="protein sequence ID" value="CAA43840.1"/>
    <property type="status" value="JOINED"/>
    <property type="molecule type" value="Genomic_DNA"/>
</dbReference>
<dbReference type="PIR" id="S31492">
    <property type="entry name" value="S31492"/>
</dbReference>
<dbReference type="RefSeq" id="NP_001079734.1">
    <molecule id="P23290-2"/>
    <property type="nucleotide sequence ID" value="NM_001086265.2"/>
</dbReference>
<dbReference type="SMR" id="P23290"/>
<dbReference type="DNASU" id="379423"/>
<dbReference type="GeneID" id="379423"/>
<dbReference type="KEGG" id="xla:379423"/>
<dbReference type="AGR" id="Xenbase:XB-GENE-6255820"/>
<dbReference type="CTD" id="379423"/>
<dbReference type="Xenbase" id="XB-GENE-6255820">
    <property type="gene designation" value="plp1.S"/>
</dbReference>
<dbReference type="OrthoDB" id="9993736at2759"/>
<dbReference type="Proteomes" id="UP000186698">
    <property type="component" value="Chromosome 8S"/>
</dbReference>
<dbReference type="Bgee" id="379423">
    <property type="expression patterns" value="Expressed in brain and 9 other cell types or tissues"/>
</dbReference>
<dbReference type="GO" id="GO:0043209">
    <property type="term" value="C:myelin sheath"/>
    <property type="evidence" value="ECO:0000318"/>
    <property type="project" value="GO_Central"/>
</dbReference>
<dbReference type="GO" id="GO:0005886">
    <property type="term" value="C:plasma membrane"/>
    <property type="evidence" value="ECO:0000250"/>
    <property type="project" value="UniProtKB"/>
</dbReference>
<dbReference type="GO" id="GO:0019911">
    <property type="term" value="F:structural constituent of myelin sheath"/>
    <property type="evidence" value="ECO:0000318"/>
    <property type="project" value="GO_Central"/>
</dbReference>
<dbReference type="GO" id="GO:0061564">
    <property type="term" value="P:axon development"/>
    <property type="evidence" value="ECO:0000318"/>
    <property type="project" value="GO_Central"/>
</dbReference>
<dbReference type="GO" id="GO:0022010">
    <property type="term" value="P:central nervous system myelination"/>
    <property type="evidence" value="ECO:0000318"/>
    <property type="project" value="GO_Central"/>
</dbReference>
<dbReference type="InterPro" id="IPR001614">
    <property type="entry name" value="Myelin_PLP"/>
</dbReference>
<dbReference type="InterPro" id="IPR018237">
    <property type="entry name" value="Myelin_PLP_CS"/>
</dbReference>
<dbReference type="PANTHER" id="PTHR11683">
    <property type="entry name" value="MYELIN PROTEOLIPID"/>
    <property type="match status" value="1"/>
</dbReference>
<dbReference type="PANTHER" id="PTHR11683:SF11">
    <property type="entry name" value="MYELIN PROTEOLIPID PROTEIN"/>
    <property type="match status" value="1"/>
</dbReference>
<dbReference type="Pfam" id="PF01275">
    <property type="entry name" value="Myelin_PLP"/>
    <property type="match status" value="1"/>
</dbReference>
<dbReference type="PRINTS" id="PR00214">
    <property type="entry name" value="MYELINPLP"/>
</dbReference>
<dbReference type="SMART" id="SM00002">
    <property type="entry name" value="PLP"/>
    <property type="match status" value="1"/>
</dbReference>
<dbReference type="PROSITE" id="PS00575">
    <property type="entry name" value="MYELIN_PLP_1"/>
    <property type="match status" value="1"/>
</dbReference>
<dbReference type="PROSITE" id="PS01004">
    <property type="entry name" value="MYELIN_PLP_2"/>
    <property type="match status" value="1"/>
</dbReference>
<proteinExistence type="evidence at transcript level"/>
<accession>P23290</accession>
<accession>Q7SZ96</accession>